<organism>
    <name type="scientific">Vibrio vulnificus (strain YJ016)</name>
    <dbReference type="NCBI Taxonomy" id="196600"/>
    <lineage>
        <taxon>Bacteria</taxon>
        <taxon>Pseudomonadati</taxon>
        <taxon>Pseudomonadota</taxon>
        <taxon>Gammaproteobacteria</taxon>
        <taxon>Vibrionales</taxon>
        <taxon>Vibrionaceae</taxon>
        <taxon>Vibrio</taxon>
    </lineage>
</organism>
<accession>Q7MHF3</accession>
<feature type="chain" id="PRO_0000182256" description="Arginine deiminase">
    <location>
        <begin position="1"/>
        <end position="406"/>
    </location>
</feature>
<feature type="active site" description="Amidino-cysteine intermediate" evidence="1">
    <location>
        <position position="396"/>
    </location>
</feature>
<comment type="catalytic activity">
    <reaction evidence="1">
        <text>L-arginine + H2O = L-citrulline + NH4(+)</text>
        <dbReference type="Rhea" id="RHEA:19597"/>
        <dbReference type="ChEBI" id="CHEBI:15377"/>
        <dbReference type="ChEBI" id="CHEBI:28938"/>
        <dbReference type="ChEBI" id="CHEBI:32682"/>
        <dbReference type="ChEBI" id="CHEBI:57743"/>
        <dbReference type="EC" id="3.5.3.6"/>
    </reaction>
</comment>
<comment type="pathway">
    <text evidence="1">Amino-acid degradation; L-arginine degradation via ADI pathway; carbamoyl phosphate from L-arginine: step 1/2.</text>
</comment>
<comment type="subcellular location">
    <subcellularLocation>
        <location evidence="1">Cytoplasm</location>
    </subcellularLocation>
</comment>
<comment type="similarity">
    <text evidence="1">Belongs to the arginine deiminase family.</text>
</comment>
<name>ARCA_VIBVY</name>
<protein>
    <recommendedName>
        <fullName evidence="1">Arginine deiminase</fullName>
        <shortName evidence="1">ADI</shortName>
        <ecNumber evidence="1">3.5.3.6</ecNumber>
    </recommendedName>
    <alternativeName>
        <fullName evidence="1">Arginine dihydrolase</fullName>
        <shortName evidence="1">AD</shortName>
    </alternativeName>
</protein>
<gene>
    <name evidence="1" type="primary">arcA</name>
    <name type="ordered locus">VV2918</name>
</gene>
<evidence type="ECO:0000255" key="1">
    <source>
        <dbReference type="HAMAP-Rule" id="MF_00242"/>
    </source>
</evidence>
<sequence>MSKLYVGSEVGQLRRVLLNRPERALTHLTPSNCHELLFDDVLLVEAAGKEHDAFADTLRQQGVEVLLLHDLMVDTLAVPEAKQWLLDVQISDFRYGPIFARDLRRYLSEMDNEHLATILLGGLAYSELPIQSASMLPRMKQPLDFVIEPLPNHLFTRDTSCWVYGGVSLNPMMKPARQRETNHLRAIYQWHPIFAGQDFIKYFGNEDLHYDNANIEGGDVLVIGKGAVLIGMSERTTPQGVENLAANLFRHGQAKEVIAIELPKHRSCMHLDTVMTHMDVDTFSVYPEIMRKDLHTWRLTPKGNGEMQVEALHNYLHAIERALGLNHLNIITTGGDSYEAEREQWNDANNVLTVKPGVVIGYERNVYTNEKYDKAGIEVLTIPGNELGRGRGGARCMSCPIERDDI</sequence>
<keyword id="KW-0056">Arginine metabolism</keyword>
<keyword id="KW-0963">Cytoplasm</keyword>
<keyword id="KW-0378">Hydrolase</keyword>
<reference key="1">
    <citation type="journal article" date="2003" name="Genome Res.">
        <title>Comparative genome analysis of Vibrio vulnificus, a marine pathogen.</title>
        <authorList>
            <person name="Chen C.-Y."/>
            <person name="Wu K.-M."/>
            <person name="Chang Y.-C."/>
            <person name="Chang C.-H."/>
            <person name="Tsai H.-C."/>
            <person name="Liao T.-L."/>
            <person name="Liu Y.-M."/>
            <person name="Chen H.-J."/>
            <person name="Shen A.B.-T."/>
            <person name="Li J.-C."/>
            <person name="Su T.-L."/>
            <person name="Shao C.-P."/>
            <person name="Lee C.-T."/>
            <person name="Hor L.-I."/>
            <person name="Tsai S.-F."/>
        </authorList>
    </citation>
    <scope>NUCLEOTIDE SEQUENCE [LARGE SCALE GENOMIC DNA]</scope>
    <source>
        <strain>YJ016</strain>
    </source>
</reference>
<proteinExistence type="inferred from homology"/>
<dbReference type="EC" id="3.5.3.6" evidence="1"/>
<dbReference type="EMBL" id="BA000037">
    <property type="protein sequence ID" value="BAC95682.1"/>
    <property type="molecule type" value="Genomic_DNA"/>
</dbReference>
<dbReference type="RefSeq" id="WP_011151227.1">
    <property type="nucleotide sequence ID" value="NC_005139.1"/>
</dbReference>
<dbReference type="SMR" id="Q7MHF3"/>
<dbReference type="STRING" id="672.VV93_v1c26410"/>
<dbReference type="KEGG" id="vvy:VV2918"/>
<dbReference type="eggNOG" id="COG2235">
    <property type="taxonomic scope" value="Bacteria"/>
</dbReference>
<dbReference type="HOGENOM" id="CLU_052662_0_0_6"/>
<dbReference type="UniPathway" id="UPA00254">
    <property type="reaction ID" value="UER00364"/>
</dbReference>
<dbReference type="Proteomes" id="UP000002675">
    <property type="component" value="Chromosome I"/>
</dbReference>
<dbReference type="GO" id="GO:0005737">
    <property type="term" value="C:cytoplasm"/>
    <property type="evidence" value="ECO:0007669"/>
    <property type="project" value="UniProtKB-SubCell"/>
</dbReference>
<dbReference type="GO" id="GO:0016990">
    <property type="term" value="F:arginine deiminase activity"/>
    <property type="evidence" value="ECO:0007669"/>
    <property type="project" value="UniProtKB-UniRule"/>
</dbReference>
<dbReference type="GO" id="GO:0019547">
    <property type="term" value="P:arginine catabolic process to ornithine"/>
    <property type="evidence" value="ECO:0007669"/>
    <property type="project" value="UniProtKB-UniRule"/>
</dbReference>
<dbReference type="GO" id="GO:0019546">
    <property type="term" value="P:arginine deiminase pathway"/>
    <property type="evidence" value="ECO:0007669"/>
    <property type="project" value="TreeGrafter"/>
</dbReference>
<dbReference type="Gene3D" id="1.10.3930.10">
    <property type="entry name" value="Arginine deiminase"/>
    <property type="match status" value="1"/>
</dbReference>
<dbReference type="Gene3D" id="3.75.10.10">
    <property type="entry name" value="L-arginine/glycine Amidinotransferase, Chain A"/>
    <property type="match status" value="1"/>
</dbReference>
<dbReference type="HAMAP" id="MF_00242">
    <property type="entry name" value="Arg_deiminase"/>
    <property type="match status" value="1"/>
</dbReference>
<dbReference type="InterPro" id="IPR003876">
    <property type="entry name" value="Arg_deiminase"/>
</dbReference>
<dbReference type="NCBIfam" id="TIGR01078">
    <property type="entry name" value="arcA"/>
    <property type="match status" value="1"/>
</dbReference>
<dbReference type="NCBIfam" id="NF002381">
    <property type="entry name" value="PRK01388.1"/>
    <property type="match status" value="1"/>
</dbReference>
<dbReference type="PANTHER" id="PTHR47271">
    <property type="entry name" value="ARGININE DEIMINASE"/>
    <property type="match status" value="1"/>
</dbReference>
<dbReference type="PANTHER" id="PTHR47271:SF2">
    <property type="entry name" value="ARGININE DEIMINASE"/>
    <property type="match status" value="1"/>
</dbReference>
<dbReference type="Pfam" id="PF02274">
    <property type="entry name" value="ADI"/>
    <property type="match status" value="1"/>
</dbReference>
<dbReference type="PIRSF" id="PIRSF006356">
    <property type="entry name" value="Arg_deiminase"/>
    <property type="match status" value="1"/>
</dbReference>
<dbReference type="PRINTS" id="PR01466">
    <property type="entry name" value="ARGDEIMINASE"/>
</dbReference>
<dbReference type="SUPFAM" id="SSF55909">
    <property type="entry name" value="Pentein"/>
    <property type="match status" value="1"/>
</dbReference>